<accession>P53374</accession>
<sequence length="446" mass="49905">MREIVHLQTGQCGNQIGAAFWQTISGEHGLDSNGVYNGTSELQLERMSVYFNERSGNKYVPRAVLVDLEPGTMDAVRAGPFGQLFRPDNFVFGQSGAGNNWAKGHYTEGAELVDQVLDVVRREAEGCDCLQGFQITHSLGGGTGAGMGTLLISKIREEFPDRMMATFSVVPSPKVSDTVVEPYNATLSVHQLVENSDETFCIDNEALYDICMRTLKLSNPSYGDLNYLVSAVMSGVTTCLRFPGQLNSDLRKLAVNMVPFPRLHFFMVGFAPLTSRGAHSFRAVSVPELTQQMFDPKNMMAASDFRNGRYLTCSAIFRGRVAMKEVEDQMRNVQNKNSSYFVEWIPNNIQTALCAIPPRGLTMSSTFIGNSTSIQELFKRVGEQFTAMFRRKAFLHWYTGEGMDEMEFTEAESNMNDLVSEYQQYQDAGIDEEEEEYEEELPEGEE</sequence>
<name>TBB_FUSFU</name>
<reference key="1">
    <citation type="journal article" date="1996" name="Appl. Environ. Microbiol.">
        <title>Isolation of a beta-tubulin gene from Fusarium moniliforme that confers cold-sensitive benomyl resistance.</title>
        <authorList>
            <person name="Yan K."/>
            <person name="Dickman M.B."/>
        </authorList>
    </citation>
    <scope>NUCLEOTIDE SEQUENCE [GENOMIC DNA]</scope>
    <source>
        <strain>A 102</strain>
    </source>
</reference>
<proteinExistence type="inferred from homology"/>
<evidence type="ECO:0000250" key="1">
    <source>
        <dbReference type="UniProtKB" id="P68363"/>
    </source>
</evidence>
<evidence type="ECO:0000250" key="2">
    <source>
        <dbReference type="UniProtKB" id="Q13509"/>
    </source>
</evidence>
<evidence type="ECO:0000256" key="3">
    <source>
        <dbReference type="SAM" id="MobiDB-lite"/>
    </source>
</evidence>
<evidence type="ECO:0000305" key="4"/>
<keyword id="KW-0046">Antibiotic resistance</keyword>
<keyword id="KW-0963">Cytoplasm</keyword>
<keyword id="KW-0206">Cytoskeleton</keyword>
<keyword id="KW-0342">GTP-binding</keyword>
<keyword id="KW-0460">Magnesium</keyword>
<keyword id="KW-0479">Metal-binding</keyword>
<keyword id="KW-0493">Microtubule</keyword>
<keyword id="KW-0547">Nucleotide-binding</keyword>
<feature type="chain" id="PRO_0000048414" description="Tubulin beta chain">
    <location>
        <begin position="1"/>
        <end position="446"/>
    </location>
</feature>
<feature type="region of interest" description="Disordered" evidence="3">
    <location>
        <begin position="421"/>
        <end position="446"/>
    </location>
</feature>
<feature type="compositionally biased region" description="Acidic residues" evidence="3">
    <location>
        <begin position="429"/>
        <end position="446"/>
    </location>
</feature>
<feature type="binding site" evidence="2">
    <location>
        <position position="11"/>
    </location>
    <ligand>
        <name>GTP</name>
        <dbReference type="ChEBI" id="CHEBI:37565"/>
    </ligand>
</feature>
<feature type="binding site" evidence="1">
    <location>
        <position position="69"/>
    </location>
    <ligand>
        <name>GTP</name>
        <dbReference type="ChEBI" id="CHEBI:37565"/>
    </ligand>
</feature>
<feature type="binding site" evidence="1">
    <location>
        <position position="69"/>
    </location>
    <ligand>
        <name>Mg(2+)</name>
        <dbReference type="ChEBI" id="CHEBI:18420"/>
    </ligand>
</feature>
<feature type="binding site" evidence="2">
    <location>
        <position position="138"/>
    </location>
    <ligand>
        <name>GTP</name>
        <dbReference type="ChEBI" id="CHEBI:37565"/>
    </ligand>
</feature>
<feature type="binding site" evidence="2">
    <location>
        <position position="142"/>
    </location>
    <ligand>
        <name>GTP</name>
        <dbReference type="ChEBI" id="CHEBI:37565"/>
    </ligand>
</feature>
<feature type="binding site" evidence="2">
    <location>
        <position position="143"/>
    </location>
    <ligand>
        <name>GTP</name>
        <dbReference type="ChEBI" id="CHEBI:37565"/>
    </ligand>
</feature>
<feature type="binding site" evidence="2">
    <location>
        <position position="144"/>
    </location>
    <ligand>
        <name>GTP</name>
        <dbReference type="ChEBI" id="CHEBI:37565"/>
    </ligand>
</feature>
<feature type="binding site" evidence="2">
    <location>
        <position position="204"/>
    </location>
    <ligand>
        <name>GTP</name>
        <dbReference type="ChEBI" id="CHEBI:37565"/>
    </ligand>
</feature>
<feature type="binding site" evidence="2">
    <location>
        <position position="226"/>
    </location>
    <ligand>
        <name>GTP</name>
        <dbReference type="ChEBI" id="CHEBI:37565"/>
    </ligand>
</feature>
<feature type="sequence variant" description="In benomyl-resistant strain.">
    <original>Y</original>
    <variation>N</variation>
    <location>
        <position position="50"/>
    </location>
</feature>
<gene>
    <name type="primary">TUB2</name>
</gene>
<organism>
    <name type="scientific">Fusarium fujikuroi</name>
    <name type="common">Bakanae and foot rot disease fungus</name>
    <name type="synonym">Gibberella fujikuroi</name>
    <dbReference type="NCBI Taxonomy" id="5127"/>
    <lineage>
        <taxon>Eukaryota</taxon>
        <taxon>Fungi</taxon>
        <taxon>Dikarya</taxon>
        <taxon>Ascomycota</taxon>
        <taxon>Pezizomycotina</taxon>
        <taxon>Sordariomycetes</taxon>
        <taxon>Hypocreomycetidae</taxon>
        <taxon>Hypocreales</taxon>
        <taxon>Nectriaceae</taxon>
        <taxon>Fusarium</taxon>
        <taxon>Fusarium fujikuroi species complex</taxon>
    </lineage>
</organism>
<comment type="function">
    <text>Tubulin is the major constituent of microtubules, a cylinder consisting of laterally associated linear protofilaments composed of alpha- and beta-tubulin heterodimers. Microtubules grow by the addition of GTP-tubulin dimers to the microtubule end, where a stabilizing cap forms. Below the cap, tubulin dimers are in GDP-bound state, owing to GTPase activity of alpha-tubulin.</text>
</comment>
<comment type="cofactor">
    <cofactor evidence="1">
        <name>Mg(2+)</name>
        <dbReference type="ChEBI" id="CHEBI:18420"/>
    </cofactor>
</comment>
<comment type="subunit">
    <text>Dimer of alpha and beta chains. A typical microtubule is a hollow water-filled tube with an outer diameter of 25 nm and an inner diameter of 15 nM. Alpha-beta heterodimers associate head-to-tail to form protofilaments running lengthwise along the microtubule wall with the beta-tubulin subunit facing the microtubule plus end conferring a structural polarity. Microtubules usually have 13 protofilaments but different protofilament numbers can be found in some organisms and specialized cells.</text>
</comment>
<comment type="subcellular location">
    <subcellularLocation>
        <location>Cytoplasm</location>
        <location>Cytoskeleton</location>
    </subcellularLocation>
</comment>
<comment type="similarity">
    <text evidence="4">Belongs to the tubulin family.</text>
</comment>
<dbReference type="EMBL" id="U27303">
    <property type="protein sequence ID" value="AAB18275.1"/>
    <property type="molecule type" value="Genomic_DNA"/>
</dbReference>
<dbReference type="SMR" id="P53374"/>
<dbReference type="eggNOG" id="KOG1375">
    <property type="taxonomic scope" value="Eukaryota"/>
</dbReference>
<dbReference type="GO" id="GO:0005737">
    <property type="term" value="C:cytoplasm"/>
    <property type="evidence" value="ECO:0007669"/>
    <property type="project" value="UniProtKB-KW"/>
</dbReference>
<dbReference type="GO" id="GO:0005874">
    <property type="term" value="C:microtubule"/>
    <property type="evidence" value="ECO:0007669"/>
    <property type="project" value="UniProtKB-KW"/>
</dbReference>
<dbReference type="GO" id="GO:0005525">
    <property type="term" value="F:GTP binding"/>
    <property type="evidence" value="ECO:0007669"/>
    <property type="project" value="UniProtKB-KW"/>
</dbReference>
<dbReference type="GO" id="GO:0003924">
    <property type="term" value="F:GTPase activity"/>
    <property type="evidence" value="ECO:0007669"/>
    <property type="project" value="InterPro"/>
</dbReference>
<dbReference type="GO" id="GO:0046872">
    <property type="term" value="F:metal ion binding"/>
    <property type="evidence" value="ECO:0007669"/>
    <property type="project" value="UniProtKB-KW"/>
</dbReference>
<dbReference type="GO" id="GO:0005200">
    <property type="term" value="F:structural constituent of cytoskeleton"/>
    <property type="evidence" value="ECO:0007669"/>
    <property type="project" value="InterPro"/>
</dbReference>
<dbReference type="GO" id="GO:0007017">
    <property type="term" value="P:microtubule-based process"/>
    <property type="evidence" value="ECO:0007669"/>
    <property type="project" value="InterPro"/>
</dbReference>
<dbReference type="GO" id="GO:0046677">
    <property type="term" value="P:response to antibiotic"/>
    <property type="evidence" value="ECO:0007669"/>
    <property type="project" value="UniProtKB-KW"/>
</dbReference>
<dbReference type="CDD" id="cd02187">
    <property type="entry name" value="beta_tubulin"/>
    <property type="match status" value="1"/>
</dbReference>
<dbReference type="FunFam" id="1.10.287.600:FF:000003">
    <property type="entry name" value="Tubulin beta chain"/>
    <property type="match status" value="1"/>
</dbReference>
<dbReference type="FunFam" id="3.30.1330.20:FF:000002">
    <property type="entry name" value="Tubulin beta chain"/>
    <property type="match status" value="1"/>
</dbReference>
<dbReference type="FunFam" id="3.40.50.1440:FF:000009">
    <property type="entry name" value="Tubulin beta chain"/>
    <property type="match status" value="1"/>
</dbReference>
<dbReference type="Gene3D" id="1.10.287.600">
    <property type="entry name" value="Helix hairpin bin"/>
    <property type="match status" value="1"/>
</dbReference>
<dbReference type="Gene3D" id="3.30.1330.20">
    <property type="entry name" value="Tubulin/FtsZ, C-terminal domain"/>
    <property type="match status" value="1"/>
</dbReference>
<dbReference type="Gene3D" id="3.40.50.1440">
    <property type="entry name" value="Tubulin/FtsZ, GTPase domain"/>
    <property type="match status" value="1"/>
</dbReference>
<dbReference type="InterPro" id="IPR013838">
    <property type="entry name" value="Beta-tubulin_BS"/>
</dbReference>
<dbReference type="InterPro" id="IPR002453">
    <property type="entry name" value="Beta_tubulin"/>
</dbReference>
<dbReference type="InterPro" id="IPR008280">
    <property type="entry name" value="Tub_FtsZ_C"/>
</dbReference>
<dbReference type="InterPro" id="IPR000217">
    <property type="entry name" value="Tubulin"/>
</dbReference>
<dbReference type="InterPro" id="IPR037103">
    <property type="entry name" value="Tubulin/FtsZ-like_C"/>
</dbReference>
<dbReference type="InterPro" id="IPR018316">
    <property type="entry name" value="Tubulin/FtsZ_2-layer-sand-dom"/>
</dbReference>
<dbReference type="InterPro" id="IPR036525">
    <property type="entry name" value="Tubulin/FtsZ_GTPase_sf"/>
</dbReference>
<dbReference type="InterPro" id="IPR023123">
    <property type="entry name" value="Tubulin_C"/>
</dbReference>
<dbReference type="InterPro" id="IPR017975">
    <property type="entry name" value="Tubulin_CS"/>
</dbReference>
<dbReference type="InterPro" id="IPR003008">
    <property type="entry name" value="Tubulin_FtsZ_GTPase"/>
</dbReference>
<dbReference type="PANTHER" id="PTHR11588">
    <property type="entry name" value="TUBULIN"/>
    <property type="match status" value="1"/>
</dbReference>
<dbReference type="Pfam" id="PF00091">
    <property type="entry name" value="Tubulin"/>
    <property type="match status" value="1"/>
</dbReference>
<dbReference type="Pfam" id="PF03953">
    <property type="entry name" value="Tubulin_C"/>
    <property type="match status" value="1"/>
</dbReference>
<dbReference type="PRINTS" id="PR01163">
    <property type="entry name" value="BETATUBULIN"/>
</dbReference>
<dbReference type="PRINTS" id="PR01161">
    <property type="entry name" value="TUBULIN"/>
</dbReference>
<dbReference type="SMART" id="SM00864">
    <property type="entry name" value="Tubulin"/>
    <property type="match status" value="1"/>
</dbReference>
<dbReference type="SMART" id="SM00865">
    <property type="entry name" value="Tubulin_C"/>
    <property type="match status" value="1"/>
</dbReference>
<dbReference type="SUPFAM" id="SSF55307">
    <property type="entry name" value="Tubulin C-terminal domain-like"/>
    <property type="match status" value="1"/>
</dbReference>
<dbReference type="SUPFAM" id="SSF52490">
    <property type="entry name" value="Tubulin nucleotide-binding domain-like"/>
    <property type="match status" value="1"/>
</dbReference>
<dbReference type="PROSITE" id="PS00227">
    <property type="entry name" value="TUBULIN"/>
    <property type="match status" value="1"/>
</dbReference>
<dbReference type="PROSITE" id="PS00228">
    <property type="entry name" value="TUBULIN_B_AUTOREG"/>
    <property type="match status" value="1"/>
</dbReference>
<protein>
    <recommendedName>
        <fullName>Tubulin beta chain</fullName>
    </recommendedName>
    <alternativeName>
        <fullName>Beta-tubulin</fullName>
    </alternativeName>
</protein>